<dbReference type="EC" id="6.1.1.17" evidence="1"/>
<dbReference type="EMBL" id="CP000034">
    <property type="protein sequence ID" value="ABB62659.1"/>
    <property type="molecule type" value="Genomic_DNA"/>
</dbReference>
<dbReference type="RefSeq" id="WP_000695636.1">
    <property type="nucleotide sequence ID" value="NC_007606.1"/>
</dbReference>
<dbReference type="RefSeq" id="YP_404150.1">
    <property type="nucleotide sequence ID" value="NC_007606.1"/>
</dbReference>
<dbReference type="SMR" id="Q32DE6"/>
<dbReference type="STRING" id="300267.SDY_2600"/>
<dbReference type="EnsemblBacteria" id="ABB62659">
    <property type="protein sequence ID" value="ABB62659"/>
    <property type="gene ID" value="SDY_2600"/>
</dbReference>
<dbReference type="KEGG" id="sdy:SDY_2600"/>
<dbReference type="PATRIC" id="fig|300267.13.peg.3138"/>
<dbReference type="HOGENOM" id="CLU_015768_6_0_6"/>
<dbReference type="Proteomes" id="UP000002716">
    <property type="component" value="Chromosome"/>
</dbReference>
<dbReference type="GO" id="GO:0005829">
    <property type="term" value="C:cytosol"/>
    <property type="evidence" value="ECO:0007669"/>
    <property type="project" value="TreeGrafter"/>
</dbReference>
<dbReference type="GO" id="GO:0005524">
    <property type="term" value="F:ATP binding"/>
    <property type="evidence" value="ECO:0007669"/>
    <property type="project" value="UniProtKB-UniRule"/>
</dbReference>
<dbReference type="GO" id="GO:0004818">
    <property type="term" value="F:glutamate-tRNA ligase activity"/>
    <property type="evidence" value="ECO:0007669"/>
    <property type="project" value="UniProtKB-UniRule"/>
</dbReference>
<dbReference type="GO" id="GO:0000049">
    <property type="term" value="F:tRNA binding"/>
    <property type="evidence" value="ECO:0007669"/>
    <property type="project" value="InterPro"/>
</dbReference>
<dbReference type="GO" id="GO:0008270">
    <property type="term" value="F:zinc ion binding"/>
    <property type="evidence" value="ECO:0007669"/>
    <property type="project" value="UniProtKB-UniRule"/>
</dbReference>
<dbReference type="GO" id="GO:0006424">
    <property type="term" value="P:glutamyl-tRNA aminoacylation"/>
    <property type="evidence" value="ECO:0007669"/>
    <property type="project" value="UniProtKB-UniRule"/>
</dbReference>
<dbReference type="CDD" id="cd00808">
    <property type="entry name" value="GluRS_core"/>
    <property type="match status" value="1"/>
</dbReference>
<dbReference type="FunFam" id="1.10.10.350:FF:000001">
    <property type="entry name" value="Glutamate--tRNA ligase"/>
    <property type="match status" value="1"/>
</dbReference>
<dbReference type="FunFam" id="3.40.50.620:FF:000007">
    <property type="entry name" value="Glutamate--tRNA ligase"/>
    <property type="match status" value="1"/>
</dbReference>
<dbReference type="Gene3D" id="1.10.10.350">
    <property type="match status" value="1"/>
</dbReference>
<dbReference type="Gene3D" id="3.40.50.620">
    <property type="entry name" value="HUPs"/>
    <property type="match status" value="1"/>
</dbReference>
<dbReference type="HAMAP" id="MF_00022">
    <property type="entry name" value="Glu_tRNA_synth_type1"/>
    <property type="match status" value="1"/>
</dbReference>
<dbReference type="InterPro" id="IPR045462">
    <property type="entry name" value="aa-tRNA-synth_I_cd-bd"/>
</dbReference>
<dbReference type="InterPro" id="IPR020751">
    <property type="entry name" value="aa-tRNA-synth_I_codon-bd_sub2"/>
</dbReference>
<dbReference type="InterPro" id="IPR001412">
    <property type="entry name" value="aa-tRNA-synth_I_CS"/>
</dbReference>
<dbReference type="InterPro" id="IPR008925">
    <property type="entry name" value="aa_tRNA-synth_I_cd-bd_sf"/>
</dbReference>
<dbReference type="InterPro" id="IPR004527">
    <property type="entry name" value="Glu-tRNA-ligase_bac/mito"/>
</dbReference>
<dbReference type="InterPro" id="IPR000924">
    <property type="entry name" value="Glu/Gln-tRNA-synth"/>
</dbReference>
<dbReference type="InterPro" id="IPR020058">
    <property type="entry name" value="Glu/Gln-tRNA-synth_Ib_cat-dom"/>
</dbReference>
<dbReference type="InterPro" id="IPR049940">
    <property type="entry name" value="GluQ/Sye"/>
</dbReference>
<dbReference type="InterPro" id="IPR033910">
    <property type="entry name" value="GluRS_core"/>
</dbReference>
<dbReference type="InterPro" id="IPR014729">
    <property type="entry name" value="Rossmann-like_a/b/a_fold"/>
</dbReference>
<dbReference type="NCBIfam" id="TIGR00464">
    <property type="entry name" value="gltX_bact"/>
    <property type="match status" value="1"/>
</dbReference>
<dbReference type="PANTHER" id="PTHR43311">
    <property type="entry name" value="GLUTAMATE--TRNA LIGASE"/>
    <property type="match status" value="1"/>
</dbReference>
<dbReference type="PANTHER" id="PTHR43311:SF2">
    <property type="entry name" value="GLUTAMATE--TRNA LIGASE, MITOCHONDRIAL-RELATED"/>
    <property type="match status" value="1"/>
</dbReference>
<dbReference type="Pfam" id="PF19269">
    <property type="entry name" value="Anticodon_2"/>
    <property type="match status" value="1"/>
</dbReference>
<dbReference type="Pfam" id="PF00749">
    <property type="entry name" value="tRNA-synt_1c"/>
    <property type="match status" value="1"/>
</dbReference>
<dbReference type="PRINTS" id="PR00987">
    <property type="entry name" value="TRNASYNTHGLU"/>
</dbReference>
<dbReference type="SUPFAM" id="SSF48163">
    <property type="entry name" value="An anticodon-binding domain of class I aminoacyl-tRNA synthetases"/>
    <property type="match status" value="1"/>
</dbReference>
<dbReference type="SUPFAM" id="SSF52374">
    <property type="entry name" value="Nucleotidylyl transferase"/>
    <property type="match status" value="1"/>
</dbReference>
<dbReference type="PROSITE" id="PS00178">
    <property type="entry name" value="AA_TRNA_LIGASE_I"/>
    <property type="match status" value="1"/>
</dbReference>
<proteinExistence type="inferred from homology"/>
<gene>
    <name evidence="1" type="primary">gltX</name>
    <name type="ordered locus">SDY_2600</name>
</gene>
<accession>Q32DE6</accession>
<reference key="1">
    <citation type="journal article" date="2005" name="Nucleic Acids Res.">
        <title>Genome dynamics and diversity of Shigella species, the etiologic agents of bacillary dysentery.</title>
        <authorList>
            <person name="Yang F."/>
            <person name="Yang J."/>
            <person name="Zhang X."/>
            <person name="Chen L."/>
            <person name="Jiang Y."/>
            <person name="Yan Y."/>
            <person name="Tang X."/>
            <person name="Wang J."/>
            <person name="Xiong Z."/>
            <person name="Dong J."/>
            <person name="Xue Y."/>
            <person name="Zhu Y."/>
            <person name="Xu X."/>
            <person name="Sun L."/>
            <person name="Chen S."/>
            <person name="Nie H."/>
            <person name="Peng J."/>
            <person name="Xu J."/>
            <person name="Wang Y."/>
            <person name="Yuan Z."/>
            <person name="Wen Y."/>
            <person name="Yao Z."/>
            <person name="Shen Y."/>
            <person name="Qiang B."/>
            <person name="Hou Y."/>
            <person name="Yu J."/>
            <person name="Jin Q."/>
        </authorList>
    </citation>
    <scope>NUCLEOTIDE SEQUENCE [LARGE SCALE GENOMIC DNA]</scope>
    <source>
        <strain>Sd197</strain>
    </source>
</reference>
<evidence type="ECO:0000255" key="1">
    <source>
        <dbReference type="HAMAP-Rule" id="MF_00022"/>
    </source>
</evidence>
<keyword id="KW-0030">Aminoacyl-tRNA synthetase</keyword>
<keyword id="KW-0067">ATP-binding</keyword>
<keyword id="KW-0963">Cytoplasm</keyword>
<keyword id="KW-0436">Ligase</keyword>
<keyword id="KW-0479">Metal-binding</keyword>
<keyword id="KW-0547">Nucleotide-binding</keyword>
<keyword id="KW-0648">Protein biosynthesis</keyword>
<keyword id="KW-1185">Reference proteome</keyword>
<keyword id="KW-0862">Zinc</keyword>
<name>SYE_SHIDS</name>
<protein>
    <recommendedName>
        <fullName evidence="1">Glutamate--tRNA ligase</fullName>
        <ecNumber evidence="1">6.1.1.17</ecNumber>
    </recommendedName>
    <alternativeName>
        <fullName evidence="1">Glutamyl-tRNA synthetase</fullName>
        <shortName evidence="1">GluRS</shortName>
    </alternativeName>
</protein>
<organism>
    <name type="scientific">Shigella dysenteriae serotype 1 (strain Sd197)</name>
    <dbReference type="NCBI Taxonomy" id="300267"/>
    <lineage>
        <taxon>Bacteria</taxon>
        <taxon>Pseudomonadati</taxon>
        <taxon>Pseudomonadota</taxon>
        <taxon>Gammaproteobacteria</taxon>
        <taxon>Enterobacterales</taxon>
        <taxon>Enterobacteriaceae</taxon>
        <taxon>Shigella</taxon>
    </lineage>
</organism>
<feature type="chain" id="PRO_0000237400" description="Glutamate--tRNA ligase">
    <location>
        <begin position="1"/>
        <end position="471"/>
    </location>
</feature>
<feature type="short sequence motif" description="'HIGH' region" evidence="1">
    <location>
        <begin position="9"/>
        <end position="19"/>
    </location>
</feature>
<feature type="short sequence motif" description="'KMSKS' region" evidence="1">
    <location>
        <begin position="237"/>
        <end position="241"/>
    </location>
</feature>
<feature type="binding site" evidence="1">
    <location>
        <position position="98"/>
    </location>
    <ligand>
        <name>Zn(2+)</name>
        <dbReference type="ChEBI" id="CHEBI:29105"/>
    </ligand>
</feature>
<feature type="binding site" evidence="1">
    <location>
        <position position="100"/>
    </location>
    <ligand>
        <name>Zn(2+)</name>
        <dbReference type="ChEBI" id="CHEBI:29105"/>
    </ligand>
</feature>
<feature type="binding site" evidence="1">
    <location>
        <position position="125"/>
    </location>
    <ligand>
        <name>Zn(2+)</name>
        <dbReference type="ChEBI" id="CHEBI:29105"/>
    </ligand>
</feature>
<feature type="binding site" evidence="1">
    <location>
        <position position="127"/>
    </location>
    <ligand>
        <name>Zn(2+)</name>
        <dbReference type="ChEBI" id="CHEBI:29105"/>
    </ligand>
</feature>
<feature type="binding site" evidence="1">
    <location>
        <position position="240"/>
    </location>
    <ligand>
        <name>ATP</name>
        <dbReference type="ChEBI" id="CHEBI:30616"/>
    </ligand>
</feature>
<comment type="function">
    <text evidence="1">Catalyzes the attachment of glutamate to tRNA(Glu) in a two-step reaction: glutamate is first activated by ATP to form Glu-AMP and then transferred to the acceptor end of tRNA(Glu).</text>
</comment>
<comment type="catalytic activity">
    <reaction evidence="1">
        <text>tRNA(Glu) + L-glutamate + ATP = L-glutamyl-tRNA(Glu) + AMP + diphosphate</text>
        <dbReference type="Rhea" id="RHEA:23540"/>
        <dbReference type="Rhea" id="RHEA-COMP:9663"/>
        <dbReference type="Rhea" id="RHEA-COMP:9680"/>
        <dbReference type="ChEBI" id="CHEBI:29985"/>
        <dbReference type="ChEBI" id="CHEBI:30616"/>
        <dbReference type="ChEBI" id="CHEBI:33019"/>
        <dbReference type="ChEBI" id="CHEBI:78442"/>
        <dbReference type="ChEBI" id="CHEBI:78520"/>
        <dbReference type="ChEBI" id="CHEBI:456215"/>
        <dbReference type="EC" id="6.1.1.17"/>
    </reaction>
</comment>
<comment type="cofactor">
    <cofactor evidence="1">
        <name>Zn(2+)</name>
        <dbReference type="ChEBI" id="CHEBI:29105"/>
    </cofactor>
    <text evidence="1">Binds 1 zinc ion per subunit.</text>
</comment>
<comment type="subunit">
    <text evidence="1">Monomer.</text>
</comment>
<comment type="subcellular location">
    <subcellularLocation>
        <location evidence="1">Cytoplasm</location>
    </subcellularLocation>
</comment>
<comment type="similarity">
    <text evidence="1">Belongs to the class-I aminoacyl-tRNA synthetase family. Glutamate--tRNA ligase type 1 subfamily.</text>
</comment>
<sequence length="471" mass="53814">MKIKTRFAPSPTGYLHVGGARTALYSWLFARNHGGEFVLRIEDTDLERSTPEAIEAIMDGMNWLSLEWDEGPYFQTKRFDRYNAVIDQMLEEGTAYKCYCSKERLEALREEQMAKGEKPRYDDRCRHSHEHHADDEPCVVRFANPQEGSVVFDDQIRGPIEFSNQELDDLIIRRTDGSPTYNFCVVVDDWDMEITHVIRGEDHINNTPRQINILKALKAPVPVYAHVSMINGDDGKKLSKRHGAVSVMQYRDDGYLPEALLNYLVRLGWSHGDQEIFTREEMIKYFTLNAVSKSASAFNTDKLLWLNHHYINALPPEYVATHLQWHIEQENIDTRNGPQLADLVKLLGERCKTLKEMAQSCRYFYEDFAEFDADAAKKHLRPVARQPLEVVRDKLAAITDWTAENVHHAIQATADELEVGMGKVGMPLRVAVTGAGQSPALDVTVHAIGKTRSIERINKALAFIAERENQQ</sequence>